<name>NUOI_SHIFL</name>
<feature type="chain" id="PRO_0000118725" description="NADH-quinone oxidoreductase subunit I">
    <location>
        <begin position="1"/>
        <end position="180"/>
    </location>
</feature>
<feature type="domain" description="4Fe-4S ferredoxin-type 1">
    <location>
        <begin position="50"/>
        <end position="80"/>
    </location>
</feature>
<feature type="domain" description="4Fe-4S ferredoxin-type 2">
    <location>
        <begin position="90"/>
        <end position="119"/>
    </location>
</feature>
<feature type="binding site" evidence="1">
    <location>
        <position position="60"/>
    </location>
    <ligand>
        <name>[4Fe-4S] cluster</name>
        <dbReference type="ChEBI" id="CHEBI:49883"/>
        <label>1</label>
    </ligand>
</feature>
<feature type="binding site" evidence="1">
    <location>
        <position position="63"/>
    </location>
    <ligand>
        <name>[4Fe-4S] cluster</name>
        <dbReference type="ChEBI" id="CHEBI:49883"/>
        <label>1</label>
    </ligand>
</feature>
<feature type="binding site" evidence="1">
    <location>
        <position position="66"/>
    </location>
    <ligand>
        <name>[4Fe-4S] cluster</name>
        <dbReference type="ChEBI" id="CHEBI:49883"/>
        <label>1</label>
    </ligand>
</feature>
<feature type="binding site" evidence="1">
    <location>
        <position position="70"/>
    </location>
    <ligand>
        <name>[4Fe-4S] cluster</name>
        <dbReference type="ChEBI" id="CHEBI:49883"/>
        <label>2</label>
    </ligand>
</feature>
<feature type="binding site" evidence="1">
    <location>
        <position position="99"/>
    </location>
    <ligand>
        <name>[4Fe-4S] cluster</name>
        <dbReference type="ChEBI" id="CHEBI:49883"/>
        <label>2</label>
    </ligand>
</feature>
<feature type="binding site" evidence="1">
    <location>
        <position position="102"/>
    </location>
    <ligand>
        <name>[4Fe-4S] cluster</name>
        <dbReference type="ChEBI" id="CHEBI:49883"/>
        <label>2</label>
    </ligand>
</feature>
<feature type="binding site" evidence="1">
    <location>
        <position position="105"/>
    </location>
    <ligand>
        <name>[4Fe-4S] cluster</name>
        <dbReference type="ChEBI" id="CHEBI:49883"/>
        <label>2</label>
    </ligand>
</feature>
<feature type="binding site" evidence="1">
    <location>
        <position position="109"/>
    </location>
    <ligand>
        <name>[4Fe-4S] cluster</name>
        <dbReference type="ChEBI" id="CHEBI:49883"/>
        <label>1</label>
    </ligand>
</feature>
<sequence>MTLKELLVGFGTQVRSIWMIGLHAFAKRETRMYPEEPVYLPPRYRGRIVLTRDPDGEERCVACNLCAVACPVGCISLQKAETKDGRWYPEFFRINFSRCIFCGLCEEACPTTAIQLTPDFEMGEYKRQDLVYEKEDLLISGPGKYPEYNFYRMAGMAIDGKDKGEAENEAKPIDVKSLLP</sequence>
<keyword id="KW-0004">4Fe-4S</keyword>
<keyword id="KW-0997">Cell inner membrane</keyword>
<keyword id="KW-1003">Cell membrane</keyword>
<keyword id="KW-0408">Iron</keyword>
<keyword id="KW-0411">Iron-sulfur</keyword>
<keyword id="KW-0472">Membrane</keyword>
<keyword id="KW-0479">Metal-binding</keyword>
<keyword id="KW-0520">NAD</keyword>
<keyword id="KW-0874">Quinone</keyword>
<keyword id="KW-1185">Reference proteome</keyword>
<keyword id="KW-0677">Repeat</keyword>
<keyword id="KW-1278">Translocase</keyword>
<keyword id="KW-0830">Ubiquinone</keyword>
<organism>
    <name type="scientific">Shigella flexneri</name>
    <dbReference type="NCBI Taxonomy" id="623"/>
    <lineage>
        <taxon>Bacteria</taxon>
        <taxon>Pseudomonadati</taxon>
        <taxon>Pseudomonadota</taxon>
        <taxon>Gammaproteobacteria</taxon>
        <taxon>Enterobacterales</taxon>
        <taxon>Enterobacteriaceae</taxon>
        <taxon>Shigella</taxon>
    </lineage>
</organism>
<comment type="function">
    <text evidence="1">NDH-1 shuttles electrons from NADH, via FMN and iron-sulfur (Fe-S) centers, to quinones in the respiratory chain. The immediate electron acceptor for the enzyme in this species is believed to be ubiquinone. Couples the redox reaction to proton translocation (for every two electrons transferred, four hydrogen ions are translocated across the cytoplasmic membrane), and thus conserves the redox energy in a proton gradient.</text>
</comment>
<comment type="catalytic activity">
    <reaction>
        <text>a quinone + NADH + 5 H(+)(in) = a quinol + NAD(+) + 4 H(+)(out)</text>
        <dbReference type="Rhea" id="RHEA:57888"/>
        <dbReference type="ChEBI" id="CHEBI:15378"/>
        <dbReference type="ChEBI" id="CHEBI:24646"/>
        <dbReference type="ChEBI" id="CHEBI:57540"/>
        <dbReference type="ChEBI" id="CHEBI:57945"/>
        <dbReference type="ChEBI" id="CHEBI:132124"/>
    </reaction>
</comment>
<comment type="cofactor">
    <cofactor evidence="1">
        <name>[4Fe-4S] cluster</name>
        <dbReference type="ChEBI" id="CHEBI:49883"/>
    </cofactor>
    <text evidence="1">Binds 2 [4Fe-4S] clusters per subunit.</text>
</comment>
<comment type="subunit">
    <text evidence="1">NDH-1 is composed of 13 different subunits. Subunits NuoA, H, J, K, L, M, N constitute the membrane sector of the complex (By similarity).</text>
</comment>
<comment type="subcellular location">
    <subcellularLocation>
        <location evidence="2">Cell inner membrane</location>
        <topology evidence="2">Peripheral membrane protein</topology>
    </subcellularLocation>
</comment>
<comment type="similarity">
    <text evidence="2">Belongs to the complex I 23 kDa subunit family.</text>
</comment>
<accession>P0AFD9</accession>
<accession>P33604</accession>
<accession>P76488</accession>
<accession>P78183</accession>
<gene>
    <name type="primary">nuoI</name>
    <name type="ordered locus">SF2357</name>
    <name type="ordered locus">S2492</name>
</gene>
<evidence type="ECO:0000250" key="1"/>
<evidence type="ECO:0000305" key="2"/>
<reference key="1">
    <citation type="journal article" date="2002" name="Nucleic Acids Res.">
        <title>Genome sequence of Shigella flexneri 2a: insights into pathogenicity through comparison with genomes of Escherichia coli K12 and O157.</title>
        <authorList>
            <person name="Jin Q."/>
            <person name="Yuan Z."/>
            <person name="Xu J."/>
            <person name="Wang Y."/>
            <person name="Shen Y."/>
            <person name="Lu W."/>
            <person name="Wang J."/>
            <person name="Liu H."/>
            <person name="Yang J."/>
            <person name="Yang F."/>
            <person name="Zhang X."/>
            <person name="Zhang J."/>
            <person name="Yang G."/>
            <person name="Wu H."/>
            <person name="Qu D."/>
            <person name="Dong J."/>
            <person name="Sun L."/>
            <person name="Xue Y."/>
            <person name="Zhao A."/>
            <person name="Gao Y."/>
            <person name="Zhu J."/>
            <person name="Kan B."/>
            <person name="Ding K."/>
            <person name="Chen S."/>
            <person name="Cheng H."/>
            <person name="Yao Z."/>
            <person name="He B."/>
            <person name="Chen R."/>
            <person name="Ma D."/>
            <person name="Qiang B."/>
            <person name="Wen Y."/>
            <person name="Hou Y."/>
            <person name="Yu J."/>
        </authorList>
    </citation>
    <scope>NUCLEOTIDE SEQUENCE [LARGE SCALE GENOMIC DNA]</scope>
    <source>
        <strain>301 / Serotype 2a</strain>
    </source>
</reference>
<reference key="2">
    <citation type="journal article" date="2003" name="Infect. Immun.">
        <title>Complete genome sequence and comparative genomics of Shigella flexneri serotype 2a strain 2457T.</title>
        <authorList>
            <person name="Wei J."/>
            <person name="Goldberg M.B."/>
            <person name="Burland V."/>
            <person name="Venkatesan M.M."/>
            <person name="Deng W."/>
            <person name="Fournier G."/>
            <person name="Mayhew G.F."/>
            <person name="Plunkett G. III"/>
            <person name="Rose D.J."/>
            <person name="Darling A."/>
            <person name="Mau B."/>
            <person name="Perna N.T."/>
            <person name="Payne S.M."/>
            <person name="Runyen-Janecky L.J."/>
            <person name="Zhou S."/>
            <person name="Schwartz D.C."/>
            <person name="Blattner F.R."/>
        </authorList>
    </citation>
    <scope>NUCLEOTIDE SEQUENCE [LARGE SCALE GENOMIC DNA]</scope>
    <source>
        <strain>ATCC 700930 / 2457T / Serotype 2a</strain>
    </source>
</reference>
<dbReference type="EC" id="7.1.1.-"/>
<dbReference type="EMBL" id="AE005674">
    <property type="protein sequence ID" value="AAN43870.1"/>
    <property type="molecule type" value="Genomic_DNA"/>
</dbReference>
<dbReference type="EMBL" id="AE014073">
    <property type="protein sequence ID" value="AAP17688.1"/>
    <property type="molecule type" value="Genomic_DNA"/>
</dbReference>
<dbReference type="RefSeq" id="NP_708163.1">
    <property type="nucleotide sequence ID" value="NC_004337.2"/>
</dbReference>
<dbReference type="RefSeq" id="WP_000172749.1">
    <property type="nucleotide sequence ID" value="NZ_WPGW01000084.1"/>
</dbReference>
<dbReference type="SMR" id="P0AFD9"/>
<dbReference type="STRING" id="198214.SF2357"/>
<dbReference type="PaxDb" id="198214-SF2357"/>
<dbReference type="GeneID" id="1025516"/>
<dbReference type="GeneID" id="89517116"/>
<dbReference type="KEGG" id="sfl:SF2357"/>
<dbReference type="KEGG" id="sfx:S2492"/>
<dbReference type="PATRIC" id="fig|198214.7.peg.2823"/>
<dbReference type="HOGENOM" id="CLU_067218_4_3_6"/>
<dbReference type="Proteomes" id="UP000001006">
    <property type="component" value="Chromosome"/>
</dbReference>
<dbReference type="Proteomes" id="UP000002673">
    <property type="component" value="Chromosome"/>
</dbReference>
<dbReference type="GO" id="GO:0005886">
    <property type="term" value="C:plasma membrane"/>
    <property type="evidence" value="ECO:0007669"/>
    <property type="project" value="UniProtKB-SubCell"/>
</dbReference>
<dbReference type="GO" id="GO:0051539">
    <property type="term" value="F:4 iron, 4 sulfur cluster binding"/>
    <property type="evidence" value="ECO:0007669"/>
    <property type="project" value="UniProtKB-KW"/>
</dbReference>
<dbReference type="GO" id="GO:0005506">
    <property type="term" value="F:iron ion binding"/>
    <property type="evidence" value="ECO:0007669"/>
    <property type="project" value="UniProtKB-UniRule"/>
</dbReference>
<dbReference type="GO" id="GO:0050136">
    <property type="term" value="F:NADH:ubiquinone reductase (non-electrogenic) activity"/>
    <property type="evidence" value="ECO:0007669"/>
    <property type="project" value="UniProtKB-UniRule"/>
</dbReference>
<dbReference type="GO" id="GO:0048038">
    <property type="term" value="F:quinone binding"/>
    <property type="evidence" value="ECO:0007669"/>
    <property type="project" value="UniProtKB-KW"/>
</dbReference>
<dbReference type="GO" id="GO:0009060">
    <property type="term" value="P:aerobic respiration"/>
    <property type="evidence" value="ECO:0007669"/>
    <property type="project" value="TreeGrafter"/>
</dbReference>
<dbReference type="FunFam" id="3.30.70.3270:FF:000002">
    <property type="entry name" value="NADH-quinone oxidoreductase subunit I"/>
    <property type="match status" value="1"/>
</dbReference>
<dbReference type="Gene3D" id="3.30.70.3270">
    <property type="match status" value="1"/>
</dbReference>
<dbReference type="HAMAP" id="MF_01351">
    <property type="entry name" value="NDH1_NuoI"/>
    <property type="match status" value="1"/>
</dbReference>
<dbReference type="InterPro" id="IPR017896">
    <property type="entry name" value="4Fe4S_Fe-S-bd"/>
</dbReference>
<dbReference type="InterPro" id="IPR017900">
    <property type="entry name" value="4Fe4S_Fe_S_CS"/>
</dbReference>
<dbReference type="InterPro" id="IPR010226">
    <property type="entry name" value="NADH_quinone_OxRdtase_chainI"/>
</dbReference>
<dbReference type="NCBIfam" id="TIGR01971">
    <property type="entry name" value="NuoI"/>
    <property type="match status" value="1"/>
</dbReference>
<dbReference type="NCBIfam" id="NF004536">
    <property type="entry name" value="PRK05888.1-1"/>
    <property type="match status" value="1"/>
</dbReference>
<dbReference type="PANTHER" id="PTHR10849:SF20">
    <property type="entry name" value="NADH DEHYDROGENASE [UBIQUINONE] IRON-SULFUR PROTEIN 8, MITOCHONDRIAL"/>
    <property type="match status" value="1"/>
</dbReference>
<dbReference type="PANTHER" id="PTHR10849">
    <property type="entry name" value="NADH DEHYDROGENASE UBIQUINONE IRON-SULFUR PROTEIN 8, MITOCHONDRIAL"/>
    <property type="match status" value="1"/>
</dbReference>
<dbReference type="Pfam" id="PF12838">
    <property type="entry name" value="Fer4_7"/>
    <property type="match status" value="1"/>
</dbReference>
<dbReference type="SUPFAM" id="SSF54862">
    <property type="entry name" value="4Fe-4S ferredoxins"/>
    <property type="match status" value="1"/>
</dbReference>
<dbReference type="PROSITE" id="PS00198">
    <property type="entry name" value="4FE4S_FER_1"/>
    <property type="match status" value="2"/>
</dbReference>
<dbReference type="PROSITE" id="PS51379">
    <property type="entry name" value="4FE4S_FER_2"/>
    <property type="match status" value="2"/>
</dbReference>
<protein>
    <recommendedName>
        <fullName>NADH-quinone oxidoreductase subunit I</fullName>
        <ecNumber>7.1.1.-</ecNumber>
    </recommendedName>
    <alternativeName>
        <fullName>NADH dehydrogenase I subunit I</fullName>
    </alternativeName>
    <alternativeName>
        <fullName>NDH-1 subunit I</fullName>
    </alternativeName>
    <alternativeName>
        <fullName>NUO9</fullName>
    </alternativeName>
</protein>
<proteinExistence type="inferred from homology"/>